<gene>
    <name evidence="1" type="primary">ilvD</name>
    <name type="ordered locus">PMT_0560</name>
</gene>
<comment type="function">
    <text evidence="1">Functions in the biosynthesis of branched-chain amino acids. Catalyzes the dehydration of (2R,3R)-2,3-dihydroxy-3-methylpentanoate (2,3-dihydroxy-3-methylvalerate) into 2-oxo-3-methylpentanoate (2-oxo-3-methylvalerate) and of (2R)-2,3-dihydroxy-3-methylbutanoate (2,3-dihydroxyisovalerate) into 2-oxo-3-methylbutanoate (2-oxoisovalerate), the penultimate precursor to L-isoleucine and L-valine, respectively.</text>
</comment>
<comment type="catalytic activity">
    <reaction evidence="1">
        <text>(2R)-2,3-dihydroxy-3-methylbutanoate = 3-methyl-2-oxobutanoate + H2O</text>
        <dbReference type="Rhea" id="RHEA:24809"/>
        <dbReference type="ChEBI" id="CHEBI:11851"/>
        <dbReference type="ChEBI" id="CHEBI:15377"/>
        <dbReference type="ChEBI" id="CHEBI:49072"/>
        <dbReference type="EC" id="4.2.1.9"/>
    </reaction>
    <physiologicalReaction direction="left-to-right" evidence="1">
        <dbReference type="Rhea" id="RHEA:24810"/>
    </physiologicalReaction>
</comment>
<comment type="catalytic activity">
    <reaction evidence="1">
        <text>(2R,3R)-2,3-dihydroxy-3-methylpentanoate = (S)-3-methyl-2-oxopentanoate + H2O</text>
        <dbReference type="Rhea" id="RHEA:27694"/>
        <dbReference type="ChEBI" id="CHEBI:15377"/>
        <dbReference type="ChEBI" id="CHEBI:35146"/>
        <dbReference type="ChEBI" id="CHEBI:49258"/>
        <dbReference type="EC" id="4.2.1.9"/>
    </reaction>
    <physiologicalReaction direction="left-to-right" evidence="1">
        <dbReference type="Rhea" id="RHEA:27695"/>
    </physiologicalReaction>
</comment>
<comment type="cofactor">
    <cofactor evidence="1">
        <name>[2Fe-2S] cluster</name>
        <dbReference type="ChEBI" id="CHEBI:190135"/>
    </cofactor>
    <text evidence="1">Binds 1 [2Fe-2S] cluster per subunit. This cluster acts as a Lewis acid cofactor.</text>
</comment>
<comment type="cofactor">
    <cofactor evidence="1">
        <name>Mg(2+)</name>
        <dbReference type="ChEBI" id="CHEBI:18420"/>
    </cofactor>
</comment>
<comment type="pathway">
    <text evidence="1">Amino-acid biosynthesis; L-isoleucine biosynthesis; L-isoleucine from 2-oxobutanoate: step 3/4.</text>
</comment>
<comment type="pathway">
    <text evidence="1">Amino-acid biosynthesis; L-valine biosynthesis; L-valine from pyruvate: step 3/4.</text>
</comment>
<comment type="subunit">
    <text evidence="1">Homodimer.</text>
</comment>
<comment type="similarity">
    <text evidence="1">Belongs to the IlvD/Edd family.</text>
</comment>
<dbReference type="EC" id="4.2.1.9" evidence="1"/>
<dbReference type="EMBL" id="BX548175">
    <property type="protein sequence ID" value="CAE20735.1"/>
    <property type="molecule type" value="Genomic_DNA"/>
</dbReference>
<dbReference type="RefSeq" id="WP_011129939.1">
    <property type="nucleotide sequence ID" value="NC_005071.1"/>
</dbReference>
<dbReference type="SMR" id="Q7TV16"/>
<dbReference type="KEGG" id="pmt:PMT_0560"/>
<dbReference type="eggNOG" id="COG0129">
    <property type="taxonomic scope" value="Bacteria"/>
</dbReference>
<dbReference type="HOGENOM" id="CLU_014271_4_2_3"/>
<dbReference type="OrthoDB" id="9807077at2"/>
<dbReference type="UniPathway" id="UPA00047">
    <property type="reaction ID" value="UER00057"/>
</dbReference>
<dbReference type="UniPathway" id="UPA00049">
    <property type="reaction ID" value="UER00061"/>
</dbReference>
<dbReference type="Proteomes" id="UP000001423">
    <property type="component" value="Chromosome"/>
</dbReference>
<dbReference type="GO" id="GO:0051537">
    <property type="term" value="F:2 iron, 2 sulfur cluster binding"/>
    <property type="evidence" value="ECO:0007669"/>
    <property type="project" value="UniProtKB-UniRule"/>
</dbReference>
<dbReference type="GO" id="GO:0004160">
    <property type="term" value="F:dihydroxy-acid dehydratase activity"/>
    <property type="evidence" value="ECO:0007669"/>
    <property type="project" value="UniProtKB-UniRule"/>
</dbReference>
<dbReference type="GO" id="GO:0000287">
    <property type="term" value="F:magnesium ion binding"/>
    <property type="evidence" value="ECO:0007669"/>
    <property type="project" value="UniProtKB-UniRule"/>
</dbReference>
<dbReference type="GO" id="GO:0009097">
    <property type="term" value="P:isoleucine biosynthetic process"/>
    <property type="evidence" value="ECO:0007669"/>
    <property type="project" value="UniProtKB-UniRule"/>
</dbReference>
<dbReference type="GO" id="GO:0009099">
    <property type="term" value="P:L-valine biosynthetic process"/>
    <property type="evidence" value="ECO:0007669"/>
    <property type="project" value="UniProtKB-UniRule"/>
</dbReference>
<dbReference type="FunFam" id="3.50.30.80:FF:000001">
    <property type="entry name" value="Dihydroxy-acid dehydratase"/>
    <property type="match status" value="1"/>
</dbReference>
<dbReference type="Gene3D" id="3.50.30.80">
    <property type="entry name" value="IlvD/EDD C-terminal domain-like"/>
    <property type="match status" value="1"/>
</dbReference>
<dbReference type="HAMAP" id="MF_00012">
    <property type="entry name" value="IlvD"/>
    <property type="match status" value="1"/>
</dbReference>
<dbReference type="InterPro" id="IPR050165">
    <property type="entry name" value="DHAD_IlvD/Edd"/>
</dbReference>
<dbReference type="InterPro" id="IPR042096">
    <property type="entry name" value="Dihydro-acid_dehy_C"/>
</dbReference>
<dbReference type="InterPro" id="IPR004404">
    <property type="entry name" value="DihydroxyA_deHydtase"/>
</dbReference>
<dbReference type="InterPro" id="IPR020558">
    <property type="entry name" value="DiOHA_6PGluconate_deHydtase_CS"/>
</dbReference>
<dbReference type="InterPro" id="IPR056740">
    <property type="entry name" value="ILV_EDD_C"/>
</dbReference>
<dbReference type="InterPro" id="IPR000581">
    <property type="entry name" value="ILV_EDD_N"/>
</dbReference>
<dbReference type="InterPro" id="IPR037237">
    <property type="entry name" value="IlvD/EDD_N"/>
</dbReference>
<dbReference type="NCBIfam" id="TIGR00110">
    <property type="entry name" value="ilvD"/>
    <property type="match status" value="1"/>
</dbReference>
<dbReference type="NCBIfam" id="NF002068">
    <property type="entry name" value="PRK00911.1"/>
    <property type="match status" value="1"/>
</dbReference>
<dbReference type="PANTHER" id="PTHR21000">
    <property type="entry name" value="DIHYDROXY-ACID DEHYDRATASE DAD"/>
    <property type="match status" value="1"/>
</dbReference>
<dbReference type="PANTHER" id="PTHR21000:SF5">
    <property type="entry name" value="DIHYDROXY-ACID DEHYDRATASE, MITOCHONDRIAL"/>
    <property type="match status" value="1"/>
</dbReference>
<dbReference type="Pfam" id="PF24877">
    <property type="entry name" value="ILV_EDD_C"/>
    <property type="match status" value="1"/>
</dbReference>
<dbReference type="Pfam" id="PF00920">
    <property type="entry name" value="ILVD_EDD_N"/>
    <property type="match status" value="1"/>
</dbReference>
<dbReference type="SUPFAM" id="SSF143975">
    <property type="entry name" value="IlvD/EDD N-terminal domain-like"/>
    <property type="match status" value="1"/>
</dbReference>
<dbReference type="SUPFAM" id="SSF52016">
    <property type="entry name" value="LeuD/IlvD-like"/>
    <property type="match status" value="1"/>
</dbReference>
<dbReference type="PROSITE" id="PS00886">
    <property type="entry name" value="ILVD_EDD_1"/>
    <property type="match status" value="1"/>
</dbReference>
<dbReference type="PROSITE" id="PS00887">
    <property type="entry name" value="ILVD_EDD_2"/>
    <property type="match status" value="1"/>
</dbReference>
<name>ILVD_PROMM</name>
<sequence>MLRSAAITKGTQRSPNRAMLRAVGFGDEDFNKPIIGIANGYSTITPCNIGLNDLARRSEEAARQAGAMPQMFGTITVSDGISMGTEGMKYSLVSREVIADSIETACNAQSMDGVLAIGGCDKNMPGAMIALARMNIPGVFVYGGTIKPGKLADRDLTVVSAFEAVGQHASGKINEEQLTAIEKNACPGAGSCGGMFTANTMSAAIETLGLSLPYSSTMAAEDEEKANSAARSAEVLVDAIKANICPRDLLTKNAFENAISVVMAVGGSTNAVLHLLAIARSAGVDLCIDDFERIRQRVPVICDLKPSGRYVTVDLHNAGGIPQVMKQLLDAGLLHGDCRNVEGKTLRELLKDVPSEPSAEQDVIHPLSKPVYAKGHLAILKGNLASEGCVAKISGIKTPVLTGPARVFESEEACLAAILNNKVKAGDVVVIRNEGPVGGPGMREMLAPTSAIVGEDLGDKVALITDGRFSGGTYGLVVGHVAPEAAVGGMIGLVQEGDSITIDANQLLIQLNVEKDELERRSSAWEKTQPRYQTGVLGKYARMVSSASNGAVTDQP</sequence>
<organism>
    <name type="scientific">Prochlorococcus marinus (strain MIT 9313)</name>
    <dbReference type="NCBI Taxonomy" id="74547"/>
    <lineage>
        <taxon>Bacteria</taxon>
        <taxon>Bacillati</taxon>
        <taxon>Cyanobacteriota</taxon>
        <taxon>Cyanophyceae</taxon>
        <taxon>Synechococcales</taxon>
        <taxon>Prochlorococcaceae</taxon>
        <taxon>Prochlorococcus</taxon>
    </lineage>
</organism>
<protein>
    <recommendedName>
        <fullName evidence="1">Dihydroxy-acid dehydratase</fullName>
        <shortName evidence="1">DAD</shortName>
        <ecNumber evidence="1">4.2.1.9</ecNumber>
    </recommendedName>
</protein>
<reference key="1">
    <citation type="journal article" date="2003" name="Nature">
        <title>Genome divergence in two Prochlorococcus ecotypes reflects oceanic niche differentiation.</title>
        <authorList>
            <person name="Rocap G."/>
            <person name="Larimer F.W."/>
            <person name="Lamerdin J.E."/>
            <person name="Malfatti S."/>
            <person name="Chain P."/>
            <person name="Ahlgren N.A."/>
            <person name="Arellano A."/>
            <person name="Coleman M."/>
            <person name="Hauser L."/>
            <person name="Hess W.R."/>
            <person name="Johnson Z.I."/>
            <person name="Land M.L."/>
            <person name="Lindell D."/>
            <person name="Post A.F."/>
            <person name="Regala W."/>
            <person name="Shah M."/>
            <person name="Shaw S.L."/>
            <person name="Steglich C."/>
            <person name="Sullivan M.B."/>
            <person name="Ting C.S."/>
            <person name="Tolonen A."/>
            <person name="Webb E.A."/>
            <person name="Zinser E.R."/>
            <person name="Chisholm S.W."/>
        </authorList>
    </citation>
    <scope>NUCLEOTIDE SEQUENCE [LARGE SCALE GENOMIC DNA]</scope>
    <source>
        <strain>MIT 9313</strain>
    </source>
</reference>
<feature type="chain" id="PRO_0000103490" description="Dihydroxy-acid dehydratase">
    <location>
        <begin position="1"/>
        <end position="556"/>
    </location>
</feature>
<feature type="active site" description="Proton acceptor" evidence="1">
    <location>
        <position position="470"/>
    </location>
</feature>
<feature type="binding site" evidence="1">
    <location>
        <position position="47"/>
    </location>
    <ligand>
        <name>[2Fe-2S] cluster</name>
        <dbReference type="ChEBI" id="CHEBI:190135"/>
    </ligand>
</feature>
<feature type="binding site" evidence="1">
    <location>
        <position position="79"/>
    </location>
    <ligand>
        <name>Mg(2+)</name>
        <dbReference type="ChEBI" id="CHEBI:18420"/>
    </ligand>
</feature>
<feature type="binding site" evidence="1">
    <location>
        <position position="120"/>
    </location>
    <ligand>
        <name>[2Fe-2S] cluster</name>
        <dbReference type="ChEBI" id="CHEBI:190135"/>
    </ligand>
</feature>
<feature type="binding site" evidence="1">
    <location>
        <position position="121"/>
    </location>
    <ligand>
        <name>Mg(2+)</name>
        <dbReference type="ChEBI" id="CHEBI:18420"/>
    </ligand>
</feature>
<feature type="binding site" description="via carbamate group" evidence="1">
    <location>
        <position position="122"/>
    </location>
    <ligand>
        <name>Mg(2+)</name>
        <dbReference type="ChEBI" id="CHEBI:18420"/>
    </ligand>
</feature>
<feature type="binding site" evidence="1">
    <location>
        <position position="192"/>
    </location>
    <ligand>
        <name>[2Fe-2S] cluster</name>
        <dbReference type="ChEBI" id="CHEBI:190135"/>
    </ligand>
</feature>
<feature type="binding site" evidence="1">
    <location>
        <position position="444"/>
    </location>
    <ligand>
        <name>Mg(2+)</name>
        <dbReference type="ChEBI" id="CHEBI:18420"/>
    </ligand>
</feature>
<feature type="modified residue" description="N6-carboxylysine" evidence="1">
    <location>
        <position position="122"/>
    </location>
</feature>
<proteinExistence type="inferred from homology"/>
<accession>Q7TV16</accession>
<evidence type="ECO:0000255" key="1">
    <source>
        <dbReference type="HAMAP-Rule" id="MF_00012"/>
    </source>
</evidence>
<keyword id="KW-0001">2Fe-2S</keyword>
<keyword id="KW-0028">Amino-acid biosynthesis</keyword>
<keyword id="KW-0100">Branched-chain amino acid biosynthesis</keyword>
<keyword id="KW-0408">Iron</keyword>
<keyword id="KW-0411">Iron-sulfur</keyword>
<keyword id="KW-0456">Lyase</keyword>
<keyword id="KW-0460">Magnesium</keyword>
<keyword id="KW-0479">Metal-binding</keyword>
<keyword id="KW-1185">Reference proteome</keyword>